<proteinExistence type="inferred from homology"/>
<reference key="1">
    <citation type="journal article" date="1996" name="J. Virol.">
        <title>The complete DNA sequence and genomic organization of the avian adenovirus CELO.</title>
        <authorList>
            <person name="Chiocca S."/>
            <person name="Kurzbauer R."/>
            <person name="Schaffner G."/>
            <person name="Baker A."/>
            <person name="Mautner V."/>
            <person name="Cotten M."/>
        </authorList>
    </citation>
    <scope>NUCLEOTIDE SEQUENCE [LARGE SCALE GENOMIC DNA]</scope>
</reference>
<comment type="function">
    <text evidence="1">Protein that inhibits host translation while promoting late viral translation by ribosome shunting. Blocks host cap-dependent translation by binding to eIF4G, displacing MKNK1 from cap initiation complexes and preventing EIF4E phosphorylation. Binds to the tripartite leader sequence of viral late mRNAs and recruits host eIF4G, PABPC1/poly-A binding protein and 40S ribosomes subunits on viral mRNAs, allowing ribosome shunting and efficient translation of late viral mRNAs even though conventional translation via ribosome scanning from the cap has been shut off in the host cell. During assembly, acts as a chaperone protein that helps hexon proteins assembly into trimers.</text>
</comment>
<comment type="subunit">
    <text evidence="1">Monomer. Interacts with hexon protein; this interaction allows chaperoning and trimerization of hexon proteins. Interacts (via N-terminus) with host initiation factor EIF4G (via C-terminus). Interacts (via RRM domain) with viral mRNAs that contain the tripartite leader; this interaction allows ribosome shunting and expression of viral late mRNAs.</text>
</comment>
<comment type="subcellular location">
    <subcellularLocation>
        <location evidence="1">Host cytoplasm</location>
    </subcellularLocation>
</comment>
<comment type="induction">
    <text evidence="1">Expressed in the late phase of the viral replicative cycle.</text>
</comment>
<comment type="PTM">
    <text evidence="1">Might be cleaved by the viral protease.</text>
</comment>
<comment type="PTM">
    <text evidence="1">Phosphorylated. Tyrosine phosphorylation enhances preferential binding to tripartite leader mRNAs and allows ribosome shunting.</text>
</comment>
<comment type="PTM">
    <text evidence="1">Methylated. Asymmetric dimethylation by host PRMT1 of the Arg/Gly-rich region may regulate shutoff protein binding to hexon and promote the capsid assembly in the nucleus.</text>
</comment>
<comment type="miscellaneous">
    <text evidence="1">All late proteins expressed from the major late promoter are produced by alternative splicing and alternative polyadenylation of the same gene giving rise to non-overlapping ORFs. A leader sequence is present in the N-terminus of all these mRNAs and is recognized by the viral shutoff protein to provide expression although conventional translation via ribosome scanning from the cap has been shut off in the host cell.</text>
</comment>
<comment type="similarity">
    <text evidence="1">Belongs to the adenoviridae shutoff protein family.</text>
</comment>
<protein>
    <recommendedName>
        <fullName evidence="1">Shutoff protein</fullName>
    </recommendedName>
    <alternativeName>
        <fullName evidence="1">100 kDa protein</fullName>
        <shortName evidence="1">p100K</shortName>
    </alternativeName>
    <alternativeName>
        <fullName evidence="1">100K-chaperone protein</fullName>
    </alternativeName>
    <alternativeName>
        <fullName evidence="1">L4-100K</fullName>
    </alternativeName>
    <alternativeName>
        <fullName evidence="1">Shutoff protein 100K</fullName>
    </alternativeName>
</protein>
<keyword id="KW-0143">Chaperone</keyword>
<keyword id="KW-1262">Eukaryotic host gene expression shutoff by virus</keyword>
<keyword id="KW-1193">Eukaryotic host translation shutoff by virus</keyword>
<keyword id="KW-1035">Host cytoplasm</keyword>
<keyword id="KW-1190">Host gene expression shutoff by virus</keyword>
<keyword id="KW-0945">Host-virus interaction</keyword>
<keyword id="KW-1075">Inhibition of eukaryotic host translation factors by virus</keyword>
<keyword id="KW-0426">Late protein</keyword>
<keyword id="KW-0488">Methylation</keyword>
<keyword id="KW-0597">Phosphoprotein</keyword>
<keyword id="KW-1185">Reference proteome</keyword>
<keyword id="KW-0694">RNA-binding</keyword>
<keyword id="KW-1155">Translational shunt</keyword>
<keyword id="KW-0813">Transport</keyword>
<sequence>MADKITREEKTIATLDLVLRVVVDAGNWDVFSKRLVRYTREQYGIELPEDIGDLPDTSEVSKVLLSHLGEDKAVLSAYRIAELTQPSEMDRAKVTEGGLAVLNASRDESEAQNPSNPEPESIESDAVEDLGVAAESDPSDDEPDPEPEYDHREADHDSDADSGYYSADGGRPGTPVDEEPQDDSPSSEETASTVIEEAQTSASNDSHDDDTHRDDGSASEEDLERDALVAPADPFPNLRKCFERQAMMLTGALKDAADTADPPETLSVDSVQRQLERFVFNPDRRVPAEHLEVRYNFYPPFLTPKAIASYHIFAVTASIPLSCKANRSGSDLLAKAKESTFFKRLPKWRLGIEIDDGLGTEVTAVTELEEAKMVPLKDDVSRLQWAKMRGEHIRFFSYPSLHMPPKISRMLMETLLQPFADENQKAEEALPCLSDEEVLAIVDPTGRLHGEDALKAVEKRRAAVTMAVRYTATLELMERVFREPSMVKKMQEVLHHTFHHGFVALVRETAKVNLSNYATFHGLTYNNPLNNCIMSKLLEGADKEDYVVDSIYLFLVLTWQTAMGMWQQAIDDMTIQMYTEVFTKNKYRLYSLPNPTAIGKAIVDILMDYDRLTEEMRKALPNFTCQSQITAFRHFLLERSNIPAVAAPFMPSDFVPLAYKQSPPLLWDQVYLLQLAFYLTKHGGYLWEAPEEEANNPSNRTYCPCNLCSPHRMPGHNAALHNEILAIGTFEIRSPDGKTFKLTPELWTNAYLDKFDAEDFHPFTVFHYPENASRFASTLKACVTQSPEILSLIRQIQESREEFLLTKGKGVYKDPNTGETISRQPRDTARAQHAGDGQALPAPGAYTTGGNRAETAPAGAVRLAPDYQDGQFPIAKVGPHYHGPKNVRREDQGYRGGPGGVRGEREVVLSRRAGGRRFGRRNTRQSGYNERANRYFGRGGGGSVRGQQGEHPTTSPSASEPPAPSRILARGTPPSPERRDRQEE</sequence>
<evidence type="ECO:0000255" key="1">
    <source>
        <dbReference type="HAMAP-Rule" id="MF_04060"/>
    </source>
</evidence>
<evidence type="ECO:0000256" key="2">
    <source>
        <dbReference type="SAM" id="MobiDB-lite"/>
    </source>
</evidence>
<organismHost>
    <name type="scientific">Galliformes</name>
    <dbReference type="NCBI Taxonomy" id="8976"/>
</organismHost>
<gene>
    <name evidence="1" type="primary">L4</name>
</gene>
<organism>
    <name type="scientific">Fowl adenovirus A serotype 1 (strain CELO / Phelps)</name>
    <name type="common">FAdV-1</name>
    <name type="synonym">Avian adenovirus gal1 (strain Phelps)</name>
    <dbReference type="NCBI Taxonomy" id="10553"/>
    <lineage>
        <taxon>Viruses</taxon>
        <taxon>Varidnaviria</taxon>
        <taxon>Bamfordvirae</taxon>
        <taxon>Preplasmiviricota</taxon>
        <taxon>Tectiliviricetes</taxon>
        <taxon>Rowavirales</taxon>
        <taxon>Adenoviridae</taxon>
        <taxon>Aviadenovirus</taxon>
        <taxon>Fowl aviadenovirus A</taxon>
    </lineage>
</organism>
<accession>Q64760</accession>
<dbReference type="EMBL" id="U46933">
    <property type="protein sequence ID" value="AAC54915.1"/>
    <property type="molecule type" value="Genomic_DNA"/>
</dbReference>
<dbReference type="RefSeq" id="NP_043889.1">
    <property type="nucleotide sequence ID" value="NC_001720.1"/>
</dbReference>
<dbReference type="GeneID" id="1476563"/>
<dbReference type="KEGG" id="vg:1476563"/>
<dbReference type="Proteomes" id="UP000001594">
    <property type="component" value="Segment"/>
</dbReference>
<dbReference type="GO" id="GO:0043657">
    <property type="term" value="C:host cell"/>
    <property type="evidence" value="ECO:0007669"/>
    <property type="project" value="GOC"/>
</dbReference>
<dbReference type="GO" id="GO:0030430">
    <property type="term" value="C:host cell cytoplasm"/>
    <property type="evidence" value="ECO:0007669"/>
    <property type="project" value="UniProtKB-SubCell"/>
</dbReference>
<dbReference type="GO" id="GO:0003723">
    <property type="term" value="F:RNA binding"/>
    <property type="evidence" value="ECO:0007669"/>
    <property type="project" value="UniProtKB-UniRule"/>
</dbReference>
<dbReference type="GO" id="GO:0019060">
    <property type="term" value="P:intracellular transport of viral protein in host cell"/>
    <property type="evidence" value="ECO:0007669"/>
    <property type="project" value="UniProtKB-UniRule"/>
</dbReference>
<dbReference type="GO" id="GO:0039657">
    <property type="term" value="P:symbiont-mediated suppression of host gene expression"/>
    <property type="evidence" value="ECO:0007669"/>
    <property type="project" value="UniProtKB-UniRule"/>
</dbReference>
<dbReference type="GO" id="GO:0039606">
    <property type="term" value="P:symbiont-mediated suppression of host translation initiation"/>
    <property type="evidence" value="ECO:0007669"/>
    <property type="project" value="UniProtKB-KW"/>
</dbReference>
<dbReference type="GO" id="GO:0039704">
    <property type="term" value="P:viral translational shunt"/>
    <property type="evidence" value="ECO:0000250"/>
    <property type="project" value="UniProtKB"/>
</dbReference>
<dbReference type="HAMAP" id="MF_04060">
    <property type="entry name" value="ADV_SHUT"/>
    <property type="match status" value="1"/>
</dbReference>
<dbReference type="InterPro" id="IPR003381">
    <property type="entry name" value="L4"/>
</dbReference>
<dbReference type="Pfam" id="PF02438">
    <property type="entry name" value="Adeno_100"/>
    <property type="match status" value="1"/>
</dbReference>
<name>SHUT_ADEG1</name>
<feature type="chain" id="PRO_0000221862" description="Shutoff protein">
    <location>
        <begin position="1"/>
        <end position="984"/>
    </location>
</feature>
<feature type="domain" description="RRM" evidence="1">
    <location>
        <begin position="479"/>
        <end position="597"/>
    </location>
</feature>
<feature type="region of interest" description="Disordered" evidence="2">
    <location>
        <begin position="131"/>
        <end position="231"/>
    </location>
</feature>
<feature type="region of interest" description="Binding to host EIF4G" evidence="1">
    <location>
        <begin position="411"/>
        <end position="476"/>
    </location>
</feature>
<feature type="region of interest" description="Disordered" evidence="2">
    <location>
        <begin position="810"/>
        <end position="853"/>
    </location>
</feature>
<feature type="region of interest" description="Disordered" evidence="2">
    <location>
        <begin position="876"/>
        <end position="984"/>
    </location>
</feature>
<feature type="compositionally biased region" description="Acidic residues" evidence="2">
    <location>
        <begin position="137"/>
        <end position="147"/>
    </location>
</feature>
<feature type="compositionally biased region" description="Basic and acidic residues" evidence="2">
    <location>
        <begin position="148"/>
        <end position="159"/>
    </location>
</feature>
<feature type="compositionally biased region" description="Acidic residues" evidence="2">
    <location>
        <begin position="176"/>
        <end position="186"/>
    </location>
</feature>
<feature type="compositionally biased region" description="Polar residues" evidence="2">
    <location>
        <begin position="190"/>
        <end position="202"/>
    </location>
</feature>
<feature type="compositionally biased region" description="Basic and acidic residues" evidence="2">
    <location>
        <begin position="205"/>
        <end position="216"/>
    </location>
</feature>
<feature type="compositionally biased region" description="Basic residues" evidence="2">
    <location>
        <begin position="913"/>
        <end position="923"/>
    </location>
</feature>
<feature type="compositionally biased region" description="Low complexity" evidence="2">
    <location>
        <begin position="945"/>
        <end position="958"/>
    </location>
</feature>
<feature type="modified residue" description="Phosphotyrosine; by host" evidence="1">
    <location>
        <position position="812"/>
    </location>
</feature>